<evidence type="ECO:0000255" key="1">
    <source>
        <dbReference type="HAMAP-Rule" id="MF_00508"/>
    </source>
</evidence>
<evidence type="ECO:0000305" key="2"/>
<gene>
    <name evidence="1" type="primary">rps10</name>
    <name type="ordered locus">Mlab_1440</name>
</gene>
<proteinExistence type="inferred from homology"/>
<feature type="chain" id="PRO_1000015052" description="Small ribosomal subunit protein uS10">
    <location>
        <begin position="1"/>
        <end position="102"/>
    </location>
</feature>
<protein>
    <recommendedName>
        <fullName evidence="1">Small ribosomal subunit protein uS10</fullName>
    </recommendedName>
    <alternativeName>
        <fullName evidence="2">30S ribosomal protein S10</fullName>
    </alternativeName>
</protein>
<dbReference type="EMBL" id="CP000559">
    <property type="protein sequence ID" value="ABN07605.1"/>
    <property type="molecule type" value="Genomic_DNA"/>
</dbReference>
<dbReference type="RefSeq" id="WP_011833808.1">
    <property type="nucleotide sequence ID" value="NC_008942.1"/>
</dbReference>
<dbReference type="SMR" id="A2STE9"/>
<dbReference type="STRING" id="410358.Mlab_1440"/>
<dbReference type="GeneID" id="4795898"/>
<dbReference type="KEGG" id="mla:Mlab_1440"/>
<dbReference type="eggNOG" id="arCOG01758">
    <property type="taxonomic scope" value="Archaea"/>
</dbReference>
<dbReference type="HOGENOM" id="CLU_122625_0_1_2"/>
<dbReference type="OrthoDB" id="371736at2157"/>
<dbReference type="Proteomes" id="UP000000365">
    <property type="component" value="Chromosome"/>
</dbReference>
<dbReference type="GO" id="GO:0015935">
    <property type="term" value="C:small ribosomal subunit"/>
    <property type="evidence" value="ECO:0007669"/>
    <property type="project" value="InterPro"/>
</dbReference>
<dbReference type="GO" id="GO:0003735">
    <property type="term" value="F:structural constituent of ribosome"/>
    <property type="evidence" value="ECO:0007669"/>
    <property type="project" value="InterPro"/>
</dbReference>
<dbReference type="GO" id="GO:0000049">
    <property type="term" value="F:tRNA binding"/>
    <property type="evidence" value="ECO:0007669"/>
    <property type="project" value="UniProtKB-UniRule"/>
</dbReference>
<dbReference type="GO" id="GO:0006412">
    <property type="term" value="P:translation"/>
    <property type="evidence" value="ECO:0007669"/>
    <property type="project" value="UniProtKB-UniRule"/>
</dbReference>
<dbReference type="FunFam" id="3.30.70.600:FF:000004">
    <property type="entry name" value="30S ribosomal protein S10"/>
    <property type="match status" value="1"/>
</dbReference>
<dbReference type="Gene3D" id="3.30.70.600">
    <property type="entry name" value="Ribosomal protein S10 domain"/>
    <property type="match status" value="1"/>
</dbReference>
<dbReference type="HAMAP" id="MF_00508">
    <property type="entry name" value="Ribosomal_uS10"/>
    <property type="match status" value="1"/>
</dbReference>
<dbReference type="InterPro" id="IPR001848">
    <property type="entry name" value="Ribosomal_uS10"/>
</dbReference>
<dbReference type="InterPro" id="IPR018268">
    <property type="entry name" value="Ribosomal_uS10_CS"/>
</dbReference>
<dbReference type="InterPro" id="IPR027486">
    <property type="entry name" value="Ribosomal_uS10_dom"/>
</dbReference>
<dbReference type="InterPro" id="IPR036838">
    <property type="entry name" value="Ribosomal_uS10_dom_sf"/>
</dbReference>
<dbReference type="InterPro" id="IPR005729">
    <property type="entry name" value="Ribosomal_uS10_euk/arc"/>
</dbReference>
<dbReference type="NCBIfam" id="TIGR01046">
    <property type="entry name" value="uS10_euk_arch"/>
    <property type="match status" value="1"/>
</dbReference>
<dbReference type="PANTHER" id="PTHR11700">
    <property type="entry name" value="30S RIBOSOMAL PROTEIN S10 FAMILY MEMBER"/>
    <property type="match status" value="1"/>
</dbReference>
<dbReference type="Pfam" id="PF00338">
    <property type="entry name" value="Ribosomal_S10"/>
    <property type="match status" value="1"/>
</dbReference>
<dbReference type="PRINTS" id="PR00971">
    <property type="entry name" value="RIBOSOMALS10"/>
</dbReference>
<dbReference type="SMART" id="SM01403">
    <property type="entry name" value="Ribosomal_S10"/>
    <property type="match status" value="1"/>
</dbReference>
<dbReference type="SUPFAM" id="SSF54999">
    <property type="entry name" value="Ribosomal protein S10"/>
    <property type="match status" value="1"/>
</dbReference>
<dbReference type="PROSITE" id="PS00361">
    <property type="entry name" value="RIBOSOMAL_S10"/>
    <property type="match status" value="1"/>
</dbReference>
<organism>
    <name type="scientific">Methanocorpusculum labreanum (strain ATCC 43576 / DSM 4855 / Z)</name>
    <dbReference type="NCBI Taxonomy" id="410358"/>
    <lineage>
        <taxon>Archaea</taxon>
        <taxon>Methanobacteriati</taxon>
        <taxon>Methanobacteriota</taxon>
        <taxon>Stenosarchaea group</taxon>
        <taxon>Methanomicrobia</taxon>
        <taxon>Methanomicrobiales</taxon>
        <taxon>Methanocorpusculaceae</taxon>
        <taxon>Methanocorpusculum</taxon>
    </lineage>
</organism>
<reference key="1">
    <citation type="journal article" date="2009" name="Stand. Genomic Sci.">
        <title>Complete genome sequence of Methanocorpusculum labreanum type strain Z.</title>
        <authorList>
            <person name="Anderson I.J."/>
            <person name="Sieprawska-Lupa M."/>
            <person name="Goltsman E."/>
            <person name="Lapidus A."/>
            <person name="Copeland A."/>
            <person name="Glavina Del Rio T."/>
            <person name="Tice H."/>
            <person name="Dalin E."/>
            <person name="Barry K."/>
            <person name="Pitluck S."/>
            <person name="Hauser L."/>
            <person name="Land M."/>
            <person name="Lucas S."/>
            <person name="Richardson P."/>
            <person name="Whitman W.B."/>
            <person name="Kyrpides N.C."/>
        </authorList>
    </citation>
    <scope>NUCLEOTIDE SEQUENCE [LARGE SCALE GENOMIC DNA]</scope>
    <source>
        <strain>ATCC 43576 / DSM 4855 / Z</strain>
    </source>
</reference>
<accession>A2STE9</accession>
<name>RS10_METLZ</name>
<keyword id="KW-1185">Reference proteome</keyword>
<keyword id="KW-0687">Ribonucleoprotein</keyword>
<keyword id="KW-0689">Ribosomal protein</keyword>
<sequence length="102" mass="11819">MQKARIRLTGTDYEKVETVCTRIREIAERTGVNMAGPIPLPTKRLIVPIRKSPDGEGTATWDRWQMRVHKRLIDLDADERALRQLMRIQVPKDISIEIVLEN</sequence>
<comment type="function">
    <text evidence="1">Involved in the binding of tRNA to the ribosomes.</text>
</comment>
<comment type="subunit">
    <text evidence="1">Part of the 30S ribosomal subunit.</text>
</comment>
<comment type="similarity">
    <text evidence="1">Belongs to the universal ribosomal protein uS10 family.</text>
</comment>